<dbReference type="EC" id="3.1.-.-" evidence="1"/>
<dbReference type="EMBL" id="FM180568">
    <property type="protein sequence ID" value="CAS09961.1"/>
    <property type="molecule type" value="Genomic_DNA"/>
</dbReference>
<dbReference type="RefSeq" id="WP_000420113.1">
    <property type="nucleotide sequence ID" value="NC_011601.1"/>
</dbReference>
<dbReference type="SMR" id="B7UFT1"/>
<dbReference type="KEGG" id="ecg:E2348C_2413"/>
<dbReference type="HOGENOM" id="CLU_031317_2_0_6"/>
<dbReference type="Proteomes" id="UP000008205">
    <property type="component" value="Chromosome"/>
</dbReference>
<dbReference type="GO" id="GO:0042781">
    <property type="term" value="F:3'-tRNA processing endoribonuclease activity"/>
    <property type="evidence" value="ECO:0007669"/>
    <property type="project" value="TreeGrafter"/>
</dbReference>
<dbReference type="GO" id="GO:0004527">
    <property type="term" value="F:exonuclease activity"/>
    <property type="evidence" value="ECO:0007669"/>
    <property type="project" value="UniProtKB-UniRule"/>
</dbReference>
<dbReference type="GO" id="GO:0008270">
    <property type="term" value="F:zinc ion binding"/>
    <property type="evidence" value="ECO:0007669"/>
    <property type="project" value="UniProtKB-UniRule"/>
</dbReference>
<dbReference type="CDD" id="cd07717">
    <property type="entry name" value="RNaseZ_ZiPD-like_MBL-fold"/>
    <property type="match status" value="1"/>
</dbReference>
<dbReference type="FunFam" id="3.60.15.10:FF:000002">
    <property type="entry name" value="Ribonuclease Z"/>
    <property type="match status" value="1"/>
</dbReference>
<dbReference type="Gene3D" id="3.60.15.10">
    <property type="entry name" value="Ribonuclease Z/Hydroxyacylglutathione hydrolase-like"/>
    <property type="match status" value="1"/>
</dbReference>
<dbReference type="HAMAP" id="MF_01818">
    <property type="entry name" value="RNase_Z_BN"/>
    <property type="match status" value="1"/>
</dbReference>
<dbReference type="InterPro" id="IPR001279">
    <property type="entry name" value="Metallo-B-lactamas"/>
</dbReference>
<dbReference type="InterPro" id="IPR036866">
    <property type="entry name" value="RibonucZ/Hydroxyglut_hydro"/>
</dbReference>
<dbReference type="InterPro" id="IPR013469">
    <property type="entry name" value="Rnase_BN"/>
</dbReference>
<dbReference type="InterPro" id="IPR013471">
    <property type="entry name" value="RNase_Z/BN"/>
</dbReference>
<dbReference type="NCBIfam" id="NF000800">
    <property type="entry name" value="PRK00055.1-1"/>
    <property type="match status" value="1"/>
</dbReference>
<dbReference type="NCBIfam" id="NF000801">
    <property type="entry name" value="PRK00055.1-3"/>
    <property type="match status" value="1"/>
</dbReference>
<dbReference type="NCBIfam" id="TIGR02651">
    <property type="entry name" value="RNase_Z"/>
    <property type="match status" value="1"/>
</dbReference>
<dbReference type="NCBIfam" id="TIGR02649">
    <property type="entry name" value="true_RNase_BN"/>
    <property type="match status" value="1"/>
</dbReference>
<dbReference type="PANTHER" id="PTHR46018">
    <property type="entry name" value="ZINC PHOSPHODIESTERASE ELAC PROTEIN 1"/>
    <property type="match status" value="1"/>
</dbReference>
<dbReference type="PANTHER" id="PTHR46018:SF2">
    <property type="entry name" value="ZINC PHOSPHODIESTERASE ELAC PROTEIN 1"/>
    <property type="match status" value="1"/>
</dbReference>
<dbReference type="Pfam" id="PF12706">
    <property type="entry name" value="Lactamase_B_2"/>
    <property type="match status" value="2"/>
</dbReference>
<dbReference type="SMART" id="SM00849">
    <property type="entry name" value="Lactamase_B"/>
    <property type="match status" value="1"/>
</dbReference>
<dbReference type="SUPFAM" id="SSF56281">
    <property type="entry name" value="Metallo-hydrolase/oxidoreductase"/>
    <property type="match status" value="1"/>
</dbReference>
<accession>B7UFT1</accession>
<protein>
    <recommendedName>
        <fullName evidence="1">Ribonuclease BN</fullName>
        <shortName evidence="1">RNase BN</shortName>
        <ecNumber evidence="1">3.1.-.-</ecNumber>
    </recommendedName>
    <alternativeName>
        <fullName evidence="1">Ribonuclease Z homolog</fullName>
        <shortName evidence="1">RNase Z homolog</shortName>
    </alternativeName>
</protein>
<gene>
    <name evidence="1" type="primary">rbn</name>
    <name type="synonym">rnz</name>
    <name type="ordered locus">E2348C_2413</name>
</gene>
<name>RBN_ECO27</name>
<comment type="function">
    <text evidence="1">Zinc phosphodiesterase, which has both exoribonuclease and endoribonuclease activities.</text>
</comment>
<comment type="cofactor">
    <cofactor evidence="1">
        <name>Zn(2+)</name>
        <dbReference type="ChEBI" id="CHEBI:29105"/>
    </cofactor>
    <text evidence="1">Binds 2 Zn(2+) ions.</text>
</comment>
<comment type="subunit">
    <text evidence="1">Homodimer.</text>
</comment>
<comment type="similarity">
    <text evidence="1">Belongs to the RNase Z family. RNase BN subfamily.</text>
</comment>
<organism>
    <name type="scientific">Escherichia coli O127:H6 (strain E2348/69 / EPEC)</name>
    <dbReference type="NCBI Taxonomy" id="574521"/>
    <lineage>
        <taxon>Bacteria</taxon>
        <taxon>Pseudomonadati</taxon>
        <taxon>Pseudomonadota</taxon>
        <taxon>Gammaproteobacteria</taxon>
        <taxon>Enterobacterales</taxon>
        <taxon>Enterobacteriaceae</taxon>
        <taxon>Escherichia</taxon>
    </lineage>
</organism>
<evidence type="ECO:0000255" key="1">
    <source>
        <dbReference type="HAMAP-Rule" id="MF_01818"/>
    </source>
</evidence>
<reference key="1">
    <citation type="journal article" date="2009" name="J. Bacteriol.">
        <title>Complete genome sequence and comparative genome analysis of enteropathogenic Escherichia coli O127:H6 strain E2348/69.</title>
        <authorList>
            <person name="Iguchi A."/>
            <person name="Thomson N.R."/>
            <person name="Ogura Y."/>
            <person name="Saunders D."/>
            <person name="Ooka T."/>
            <person name="Henderson I.R."/>
            <person name="Harris D."/>
            <person name="Asadulghani M."/>
            <person name="Kurokawa K."/>
            <person name="Dean P."/>
            <person name="Kenny B."/>
            <person name="Quail M.A."/>
            <person name="Thurston S."/>
            <person name="Dougan G."/>
            <person name="Hayashi T."/>
            <person name="Parkhill J."/>
            <person name="Frankel G."/>
        </authorList>
    </citation>
    <scope>NUCLEOTIDE SEQUENCE [LARGE SCALE GENOMIC DNA]</scope>
    <source>
        <strain>E2348/69 / EPEC</strain>
    </source>
</reference>
<feature type="chain" id="PRO_1000187952" description="Ribonuclease BN">
    <location>
        <begin position="1"/>
        <end position="305"/>
    </location>
</feature>
<feature type="active site" description="Proton acceptor" evidence="1">
    <location>
        <position position="68"/>
    </location>
</feature>
<feature type="binding site" evidence="1">
    <location>
        <position position="64"/>
    </location>
    <ligand>
        <name>Zn(2+)</name>
        <dbReference type="ChEBI" id="CHEBI:29105"/>
        <label>1</label>
        <note>catalytic</note>
    </ligand>
</feature>
<feature type="binding site" evidence="1">
    <location>
        <position position="66"/>
    </location>
    <ligand>
        <name>Zn(2+)</name>
        <dbReference type="ChEBI" id="CHEBI:29105"/>
        <label>1</label>
        <note>catalytic</note>
    </ligand>
</feature>
<feature type="binding site" evidence="1">
    <location>
        <position position="68"/>
    </location>
    <ligand>
        <name>Zn(2+)</name>
        <dbReference type="ChEBI" id="CHEBI:29105"/>
        <label>2</label>
        <note>catalytic</note>
    </ligand>
</feature>
<feature type="binding site" evidence="1">
    <location>
        <position position="69"/>
    </location>
    <ligand>
        <name>Zn(2+)</name>
        <dbReference type="ChEBI" id="CHEBI:29105"/>
        <label>2</label>
        <note>catalytic</note>
    </ligand>
</feature>
<feature type="binding site" evidence="1">
    <location>
        <position position="141"/>
    </location>
    <ligand>
        <name>Zn(2+)</name>
        <dbReference type="ChEBI" id="CHEBI:29105"/>
        <label>1</label>
        <note>catalytic</note>
    </ligand>
</feature>
<feature type="binding site" evidence="1">
    <location>
        <position position="212"/>
    </location>
    <ligand>
        <name>Zn(2+)</name>
        <dbReference type="ChEBI" id="CHEBI:29105"/>
        <label>1</label>
        <note>catalytic</note>
    </ligand>
</feature>
<feature type="binding site" evidence="1">
    <location>
        <position position="212"/>
    </location>
    <ligand>
        <name>Zn(2+)</name>
        <dbReference type="ChEBI" id="CHEBI:29105"/>
        <label>2</label>
        <note>catalytic</note>
    </ligand>
</feature>
<feature type="binding site" evidence="1">
    <location>
        <position position="270"/>
    </location>
    <ligand>
        <name>Zn(2+)</name>
        <dbReference type="ChEBI" id="CHEBI:29105"/>
        <label>2</label>
        <note>catalytic</note>
    </ligand>
</feature>
<keyword id="KW-0255">Endonuclease</keyword>
<keyword id="KW-0269">Exonuclease</keyword>
<keyword id="KW-0378">Hydrolase</keyword>
<keyword id="KW-0479">Metal-binding</keyword>
<keyword id="KW-0540">Nuclease</keyword>
<keyword id="KW-1185">Reference proteome</keyword>
<keyword id="KW-0819">tRNA processing</keyword>
<keyword id="KW-0862">Zinc</keyword>
<sequence>MELIFLGTSAGVPTRTRNVTAILLNLQHPTQSGLWLFDCGEGTQHQLLHTAFNPGKLDKIFISHLHGDHLFGLPGLLCSRSMSGIIQPLTIYGPHGIREFVETALRISGSWTDYPLEIVEIGAGEIFDDGLRKVTAYPMEHPLECYGYRIEEHDKPGALNAQALKAAGVPPGPLFQELKAGKTIMLDDGRQINGADYLAAPVPGKALAIFGDTGPCDAALELAKGVDVMVHEATLDMAMEAKANSRGHSSTRQAAALAREAGVGKLIITHVSSRYDDKGCQHLLRECRSIFPATELANDFAVFNV</sequence>
<proteinExistence type="inferred from homology"/>